<proteinExistence type="inferred from homology"/>
<organism>
    <name type="scientific">Chlamydia pneumoniae</name>
    <name type="common">Chlamydophila pneumoniae</name>
    <dbReference type="NCBI Taxonomy" id="83558"/>
    <lineage>
        <taxon>Bacteria</taxon>
        <taxon>Pseudomonadati</taxon>
        <taxon>Chlamydiota</taxon>
        <taxon>Chlamydiia</taxon>
        <taxon>Chlamydiales</taxon>
        <taxon>Chlamydiaceae</taxon>
        <taxon>Chlamydia/Chlamydophila group</taxon>
        <taxon>Chlamydia</taxon>
    </lineage>
</organism>
<name>SYH_CHLPN</name>
<evidence type="ECO:0000250" key="1"/>
<evidence type="ECO:0000305" key="2"/>
<keyword id="KW-0030">Aminoacyl-tRNA synthetase</keyword>
<keyword id="KW-0067">ATP-binding</keyword>
<keyword id="KW-0963">Cytoplasm</keyword>
<keyword id="KW-0436">Ligase</keyword>
<keyword id="KW-0547">Nucleotide-binding</keyword>
<keyword id="KW-0648">Protein biosynthesis</keyword>
<sequence>MTVTLPKGVFDIFPYLADAKQLWRHTSLWHSVEKAIHTVCMLYGFCEIRTPIFEKSEVFLHVGEESDVVKKEVYSFLDRKGRSMTLRPEGTAAVVRSFLEHGASHRSDNKFYYILPMFRYERQQAGRYRQHHQFGVEAIGVRHPLRDAEVLALLWDFYSRVGLQHMQIQLNFLGGSETRFRYDKVLRAYLKESMGELSALSQQRFSTNVLRILDSKEPEDQEIIRQAPPILDYVSDEDLKYFNEILDALRVLEIPYAINPRLVRGLDYYSDLVFEATTTFQEVSYALGGGGRYDGLISAFGGASLPACGFGVGLERAIQTLLAQKRIEPQFPHKLRLIPMEPDADQFCLEWSQHLRRLGIPTEVDWSHKKVKGALKAASTEQVSFVCLIGERELISQQLVIKNMSLRKEFFGTKEEVEQRLLYEIQNTPL</sequence>
<reference key="1">
    <citation type="journal article" date="1999" name="Nat. Genet.">
        <title>Comparative genomes of Chlamydia pneumoniae and C. trachomatis.</title>
        <authorList>
            <person name="Kalman S."/>
            <person name="Mitchell W.P."/>
            <person name="Marathe R."/>
            <person name="Lammel C.J."/>
            <person name="Fan J."/>
            <person name="Hyman R.W."/>
            <person name="Olinger L."/>
            <person name="Grimwood J."/>
            <person name="Davis R.W."/>
            <person name="Stephens R.S."/>
        </authorList>
    </citation>
    <scope>NUCLEOTIDE SEQUENCE [LARGE SCALE GENOMIC DNA]</scope>
    <source>
        <strain>CWL029</strain>
    </source>
</reference>
<reference key="2">
    <citation type="journal article" date="2000" name="Nucleic Acids Res.">
        <title>Genome sequences of Chlamydia trachomatis MoPn and Chlamydia pneumoniae AR39.</title>
        <authorList>
            <person name="Read T.D."/>
            <person name="Brunham R.C."/>
            <person name="Shen C."/>
            <person name="Gill S.R."/>
            <person name="Heidelberg J.F."/>
            <person name="White O."/>
            <person name="Hickey E.K."/>
            <person name="Peterson J.D."/>
            <person name="Utterback T.R."/>
            <person name="Berry K.J."/>
            <person name="Bass S."/>
            <person name="Linher K.D."/>
            <person name="Weidman J.F."/>
            <person name="Khouri H.M."/>
            <person name="Craven B."/>
            <person name="Bowman C."/>
            <person name="Dodson R.J."/>
            <person name="Gwinn M.L."/>
            <person name="Nelson W.C."/>
            <person name="DeBoy R.T."/>
            <person name="Kolonay J.F."/>
            <person name="McClarty G."/>
            <person name="Salzberg S.L."/>
            <person name="Eisen J.A."/>
            <person name="Fraser C.M."/>
        </authorList>
    </citation>
    <scope>NUCLEOTIDE SEQUENCE [LARGE SCALE GENOMIC DNA]</scope>
    <source>
        <strain>AR39</strain>
    </source>
</reference>
<reference key="3">
    <citation type="journal article" date="2000" name="Nucleic Acids Res.">
        <title>Comparison of whole genome sequences of Chlamydia pneumoniae J138 from Japan and CWL029 from USA.</title>
        <authorList>
            <person name="Shirai M."/>
            <person name="Hirakawa H."/>
            <person name="Kimoto M."/>
            <person name="Tabuchi M."/>
            <person name="Kishi F."/>
            <person name="Ouchi K."/>
            <person name="Shiba T."/>
            <person name="Ishii K."/>
            <person name="Hattori M."/>
            <person name="Kuhara S."/>
            <person name="Nakazawa T."/>
        </authorList>
    </citation>
    <scope>NUCLEOTIDE SEQUENCE [LARGE SCALE GENOMIC DNA]</scope>
    <source>
        <strain>J138</strain>
    </source>
</reference>
<reference key="4">
    <citation type="submission" date="2002-05" db="EMBL/GenBank/DDBJ databases">
        <title>The genome sequence of Chlamydia pneumoniae TW183 and comparison with other Chlamydia strains based on whole genome sequence analysis.</title>
        <authorList>
            <person name="Geng M.M."/>
            <person name="Schuhmacher A."/>
            <person name="Muehldorfer I."/>
            <person name="Bensch K.W."/>
            <person name="Schaefer K.P."/>
            <person name="Schneider S."/>
            <person name="Pohl T."/>
            <person name="Essig A."/>
            <person name="Marre R."/>
            <person name="Melchers K."/>
        </authorList>
    </citation>
    <scope>NUCLEOTIDE SEQUENCE [LARGE SCALE GENOMIC DNA]</scope>
    <source>
        <strain>TW-183</strain>
    </source>
</reference>
<gene>
    <name type="primary">hisS</name>
    <name type="ordered locus">CPn_0663</name>
    <name type="ordered locus">CP_0084</name>
    <name type="ordered locus">CPj0663</name>
    <name type="ordered locus">CpB0689</name>
</gene>
<dbReference type="EC" id="6.1.1.21"/>
<dbReference type="EMBL" id="AE001363">
    <property type="protein sequence ID" value="AAD18802.1"/>
    <property type="molecule type" value="Genomic_DNA"/>
</dbReference>
<dbReference type="EMBL" id="AE002161">
    <property type="protein sequence ID" value="AAF37970.1"/>
    <property type="molecule type" value="Genomic_DNA"/>
</dbReference>
<dbReference type="EMBL" id="BA000008">
    <property type="protein sequence ID" value="BAA98870.1"/>
    <property type="molecule type" value="Genomic_DNA"/>
</dbReference>
<dbReference type="EMBL" id="AE009440">
    <property type="protein sequence ID" value="AAP98618.1"/>
    <property type="molecule type" value="Genomic_DNA"/>
</dbReference>
<dbReference type="PIR" id="D86573">
    <property type="entry name" value="D86573"/>
</dbReference>
<dbReference type="PIR" id="H72052">
    <property type="entry name" value="H72052"/>
</dbReference>
<dbReference type="RefSeq" id="NP_224859.1">
    <property type="nucleotide sequence ID" value="NC_000922.1"/>
</dbReference>
<dbReference type="RefSeq" id="WP_010883301.1">
    <property type="nucleotide sequence ID" value="NZ_LN847257.1"/>
</dbReference>
<dbReference type="SMR" id="Q9Z7P1"/>
<dbReference type="STRING" id="406984.CPK_ORF00063"/>
<dbReference type="GeneID" id="45050714"/>
<dbReference type="KEGG" id="cpa:CP_0084"/>
<dbReference type="KEGG" id="cpj:hisS"/>
<dbReference type="KEGG" id="cpn:CPn_0663"/>
<dbReference type="KEGG" id="cpt:CpB0689"/>
<dbReference type="PATRIC" id="fig|115713.3.peg.733"/>
<dbReference type="eggNOG" id="COG0124">
    <property type="taxonomic scope" value="Bacteria"/>
</dbReference>
<dbReference type="HOGENOM" id="CLU_025113_1_1_0"/>
<dbReference type="OrthoDB" id="9800814at2"/>
<dbReference type="Proteomes" id="UP000000583">
    <property type="component" value="Chromosome"/>
</dbReference>
<dbReference type="Proteomes" id="UP000000801">
    <property type="component" value="Chromosome"/>
</dbReference>
<dbReference type="GO" id="GO:0005737">
    <property type="term" value="C:cytoplasm"/>
    <property type="evidence" value="ECO:0007669"/>
    <property type="project" value="UniProtKB-SubCell"/>
</dbReference>
<dbReference type="GO" id="GO:0005524">
    <property type="term" value="F:ATP binding"/>
    <property type="evidence" value="ECO:0007669"/>
    <property type="project" value="UniProtKB-UniRule"/>
</dbReference>
<dbReference type="GO" id="GO:0004821">
    <property type="term" value="F:histidine-tRNA ligase activity"/>
    <property type="evidence" value="ECO:0007669"/>
    <property type="project" value="UniProtKB-UniRule"/>
</dbReference>
<dbReference type="GO" id="GO:0006427">
    <property type="term" value="P:histidyl-tRNA aminoacylation"/>
    <property type="evidence" value="ECO:0007669"/>
    <property type="project" value="UniProtKB-UniRule"/>
</dbReference>
<dbReference type="CDD" id="cd00773">
    <property type="entry name" value="HisRS-like_core"/>
    <property type="match status" value="1"/>
</dbReference>
<dbReference type="FunFam" id="3.30.930.10:FF:000166">
    <property type="entry name" value="Histidine--tRNA ligase"/>
    <property type="match status" value="1"/>
</dbReference>
<dbReference type="Gene3D" id="3.40.50.800">
    <property type="entry name" value="Anticodon-binding domain"/>
    <property type="match status" value="1"/>
</dbReference>
<dbReference type="Gene3D" id="3.30.930.10">
    <property type="entry name" value="Bira Bifunctional Protein, Domain 2"/>
    <property type="match status" value="1"/>
</dbReference>
<dbReference type="HAMAP" id="MF_00127">
    <property type="entry name" value="His_tRNA_synth"/>
    <property type="match status" value="1"/>
</dbReference>
<dbReference type="InterPro" id="IPR006195">
    <property type="entry name" value="aa-tRNA-synth_II"/>
</dbReference>
<dbReference type="InterPro" id="IPR045864">
    <property type="entry name" value="aa-tRNA-synth_II/BPL/LPL"/>
</dbReference>
<dbReference type="InterPro" id="IPR004154">
    <property type="entry name" value="Anticodon-bd"/>
</dbReference>
<dbReference type="InterPro" id="IPR036621">
    <property type="entry name" value="Anticodon-bd_dom_sf"/>
</dbReference>
<dbReference type="InterPro" id="IPR015807">
    <property type="entry name" value="His-tRNA-ligase"/>
</dbReference>
<dbReference type="InterPro" id="IPR041715">
    <property type="entry name" value="HisRS-like_core"/>
</dbReference>
<dbReference type="InterPro" id="IPR004516">
    <property type="entry name" value="HisRS/HisZ"/>
</dbReference>
<dbReference type="NCBIfam" id="TIGR00442">
    <property type="entry name" value="hisS"/>
    <property type="match status" value="1"/>
</dbReference>
<dbReference type="PANTHER" id="PTHR43707:SF1">
    <property type="entry name" value="HISTIDINE--TRNA LIGASE, MITOCHONDRIAL-RELATED"/>
    <property type="match status" value="1"/>
</dbReference>
<dbReference type="PANTHER" id="PTHR43707">
    <property type="entry name" value="HISTIDYL-TRNA SYNTHETASE"/>
    <property type="match status" value="1"/>
</dbReference>
<dbReference type="Pfam" id="PF03129">
    <property type="entry name" value="HGTP_anticodon"/>
    <property type="match status" value="1"/>
</dbReference>
<dbReference type="Pfam" id="PF13393">
    <property type="entry name" value="tRNA-synt_His"/>
    <property type="match status" value="1"/>
</dbReference>
<dbReference type="PIRSF" id="PIRSF001549">
    <property type="entry name" value="His-tRNA_synth"/>
    <property type="match status" value="1"/>
</dbReference>
<dbReference type="SUPFAM" id="SSF52954">
    <property type="entry name" value="Class II aaRS ABD-related"/>
    <property type="match status" value="1"/>
</dbReference>
<dbReference type="SUPFAM" id="SSF55681">
    <property type="entry name" value="Class II aaRS and biotin synthetases"/>
    <property type="match status" value="1"/>
</dbReference>
<dbReference type="PROSITE" id="PS50862">
    <property type="entry name" value="AA_TRNA_LIGASE_II"/>
    <property type="match status" value="1"/>
</dbReference>
<feature type="chain" id="PRO_0000136135" description="Histidine--tRNA ligase">
    <location>
        <begin position="1"/>
        <end position="430"/>
    </location>
</feature>
<feature type="sequence conflict" description="In Ref. 3; BAA98870." evidence="2" ref="3">
    <original>F</original>
    <variation>V</variation>
    <location>
        <position position="76"/>
    </location>
</feature>
<feature type="sequence conflict" description="In Ref. 3; BAA98870." evidence="2" ref="3">
    <original>G</original>
    <variation>R</variation>
    <location>
        <position position="90"/>
    </location>
</feature>
<feature type="sequence conflict" description="In Ref. 3; BAA98870." evidence="2" ref="3">
    <original>RS</original>
    <variation>SA</variation>
    <location>
        <begin position="96"/>
        <end position="97"/>
    </location>
</feature>
<feature type="sequence conflict" description="In Ref. 3; BAA98870." evidence="2" ref="3">
    <original>N</original>
    <variation>I</variation>
    <location>
        <position position="109"/>
    </location>
</feature>
<comment type="catalytic activity">
    <reaction>
        <text>tRNA(His) + L-histidine + ATP = L-histidyl-tRNA(His) + AMP + diphosphate + H(+)</text>
        <dbReference type="Rhea" id="RHEA:17313"/>
        <dbReference type="Rhea" id="RHEA-COMP:9665"/>
        <dbReference type="Rhea" id="RHEA-COMP:9689"/>
        <dbReference type="ChEBI" id="CHEBI:15378"/>
        <dbReference type="ChEBI" id="CHEBI:30616"/>
        <dbReference type="ChEBI" id="CHEBI:33019"/>
        <dbReference type="ChEBI" id="CHEBI:57595"/>
        <dbReference type="ChEBI" id="CHEBI:78442"/>
        <dbReference type="ChEBI" id="CHEBI:78527"/>
        <dbReference type="ChEBI" id="CHEBI:456215"/>
        <dbReference type="EC" id="6.1.1.21"/>
    </reaction>
</comment>
<comment type="subunit">
    <text evidence="1">Homodimer.</text>
</comment>
<comment type="subcellular location">
    <subcellularLocation>
        <location evidence="1">Cytoplasm</location>
    </subcellularLocation>
</comment>
<comment type="similarity">
    <text evidence="2">Belongs to the class-II aminoacyl-tRNA synthetase family.</text>
</comment>
<accession>Q9Z7P1</accession>
<accession>Q9JQL3</accession>
<accession>Q9JSC4</accession>
<protein>
    <recommendedName>
        <fullName>Histidine--tRNA ligase</fullName>
        <ecNumber>6.1.1.21</ecNumber>
    </recommendedName>
    <alternativeName>
        <fullName>Histidyl-tRNA synthetase</fullName>
        <shortName>HisRS</shortName>
    </alternativeName>
</protein>